<dbReference type="EC" id="2.2.1.2" evidence="2"/>
<dbReference type="EMBL" id="CP000447">
    <property type="protein sequence ID" value="ABI72739.1"/>
    <property type="molecule type" value="Genomic_DNA"/>
</dbReference>
<dbReference type="RefSeq" id="WP_011638348.1">
    <property type="nucleotide sequence ID" value="NC_008345.1"/>
</dbReference>
<dbReference type="SMR" id="Q07Z25"/>
<dbReference type="STRING" id="318167.Sfri_2900"/>
<dbReference type="KEGG" id="sfr:Sfri_2900"/>
<dbReference type="eggNOG" id="COG0176">
    <property type="taxonomic scope" value="Bacteria"/>
</dbReference>
<dbReference type="HOGENOM" id="CLU_047470_0_1_6"/>
<dbReference type="OrthoDB" id="9809101at2"/>
<dbReference type="UniPathway" id="UPA00115">
    <property type="reaction ID" value="UER00414"/>
</dbReference>
<dbReference type="Proteomes" id="UP000000684">
    <property type="component" value="Chromosome"/>
</dbReference>
<dbReference type="GO" id="GO:0005829">
    <property type="term" value="C:cytosol"/>
    <property type="evidence" value="ECO:0007669"/>
    <property type="project" value="TreeGrafter"/>
</dbReference>
<dbReference type="GO" id="GO:0004801">
    <property type="term" value="F:transaldolase activity"/>
    <property type="evidence" value="ECO:0000250"/>
    <property type="project" value="UniProtKB"/>
</dbReference>
<dbReference type="GO" id="GO:0005975">
    <property type="term" value="P:carbohydrate metabolic process"/>
    <property type="evidence" value="ECO:0007669"/>
    <property type="project" value="InterPro"/>
</dbReference>
<dbReference type="GO" id="GO:0006098">
    <property type="term" value="P:pentose-phosphate shunt"/>
    <property type="evidence" value="ECO:0007669"/>
    <property type="project" value="UniProtKB-UniRule"/>
</dbReference>
<dbReference type="CDD" id="cd00957">
    <property type="entry name" value="Transaldolase_TalAB"/>
    <property type="match status" value="1"/>
</dbReference>
<dbReference type="FunFam" id="3.20.20.70:FF:000002">
    <property type="entry name" value="Transaldolase"/>
    <property type="match status" value="1"/>
</dbReference>
<dbReference type="Gene3D" id="3.20.20.70">
    <property type="entry name" value="Aldolase class I"/>
    <property type="match status" value="1"/>
</dbReference>
<dbReference type="HAMAP" id="MF_00492">
    <property type="entry name" value="Transaldolase_1"/>
    <property type="match status" value="1"/>
</dbReference>
<dbReference type="InterPro" id="IPR013785">
    <property type="entry name" value="Aldolase_TIM"/>
</dbReference>
<dbReference type="InterPro" id="IPR001585">
    <property type="entry name" value="TAL/FSA"/>
</dbReference>
<dbReference type="InterPro" id="IPR004730">
    <property type="entry name" value="Transaldolase_1"/>
</dbReference>
<dbReference type="InterPro" id="IPR018225">
    <property type="entry name" value="Transaldolase_AS"/>
</dbReference>
<dbReference type="NCBIfam" id="NF009001">
    <property type="entry name" value="PRK12346.1"/>
    <property type="match status" value="1"/>
</dbReference>
<dbReference type="NCBIfam" id="TIGR00874">
    <property type="entry name" value="talAB"/>
    <property type="match status" value="1"/>
</dbReference>
<dbReference type="PANTHER" id="PTHR10683">
    <property type="entry name" value="TRANSALDOLASE"/>
    <property type="match status" value="1"/>
</dbReference>
<dbReference type="PANTHER" id="PTHR10683:SF18">
    <property type="entry name" value="TRANSALDOLASE"/>
    <property type="match status" value="1"/>
</dbReference>
<dbReference type="Pfam" id="PF00923">
    <property type="entry name" value="TAL_FSA"/>
    <property type="match status" value="1"/>
</dbReference>
<dbReference type="SUPFAM" id="SSF51569">
    <property type="entry name" value="Aldolase"/>
    <property type="match status" value="1"/>
</dbReference>
<dbReference type="PROSITE" id="PS01054">
    <property type="entry name" value="TRANSALDOLASE_1"/>
    <property type="match status" value="1"/>
</dbReference>
<dbReference type="PROSITE" id="PS00958">
    <property type="entry name" value="TRANSALDOLASE_2"/>
    <property type="match status" value="1"/>
</dbReference>
<evidence type="ECO:0000250" key="1"/>
<evidence type="ECO:0000255" key="2">
    <source>
        <dbReference type="HAMAP-Rule" id="MF_00492"/>
    </source>
</evidence>
<comment type="function">
    <text evidence="2">Transaldolase is important for the balance of metabolites in the pentose-phosphate pathway.</text>
</comment>
<comment type="catalytic activity">
    <reaction evidence="2">
        <text>D-sedoheptulose 7-phosphate + D-glyceraldehyde 3-phosphate = D-erythrose 4-phosphate + beta-D-fructose 6-phosphate</text>
        <dbReference type="Rhea" id="RHEA:17053"/>
        <dbReference type="ChEBI" id="CHEBI:16897"/>
        <dbReference type="ChEBI" id="CHEBI:57483"/>
        <dbReference type="ChEBI" id="CHEBI:57634"/>
        <dbReference type="ChEBI" id="CHEBI:59776"/>
        <dbReference type="EC" id="2.2.1.2"/>
    </reaction>
</comment>
<comment type="pathway">
    <text evidence="2">Carbohydrate degradation; pentose phosphate pathway; D-glyceraldehyde 3-phosphate and beta-D-fructose 6-phosphate from D-ribose 5-phosphate and D-xylulose 5-phosphate (non-oxidative stage): step 2/3.</text>
</comment>
<comment type="subunit">
    <text evidence="1">Homodimer.</text>
</comment>
<comment type="subcellular location">
    <subcellularLocation>
        <location evidence="2">Cytoplasm</location>
    </subcellularLocation>
</comment>
<comment type="similarity">
    <text evidence="2">Belongs to the transaldolase family. Type 1 subfamily.</text>
</comment>
<keyword id="KW-0963">Cytoplasm</keyword>
<keyword id="KW-0570">Pentose shunt</keyword>
<keyword id="KW-1185">Reference proteome</keyword>
<keyword id="KW-0704">Schiff base</keyword>
<keyword id="KW-0808">Transferase</keyword>
<name>TAL_SHEFN</name>
<feature type="chain" id="PRO_1000014524" description="Transaldolase">
    <location>
        <begin position="1"/>
        <end position="317"/>
    </location>
</feature>
<feature type="active site" description="Schiff-base intermediate with substrate" evidence="2">
    <location>
        <position position="132"/>
    </location>
</feature>
<sequence length="317" mass="35012">MANALAQLKSFTTIVADTGDIEAIKRYQPEDATTNPSLILKASQIPEYAFLIENAIEWAKTQSHSIEQQIEDAGDKLAVNIGVEILKLVPGRISTEVDARLSFDKQRSIDKAHKLIKLYKDAGIDKSRILIKLASTWEGICAAKELEQEGINCNLTLLFSFAQARACAEAGVYLISPFVGRILDWYKKDTGQDYTAETDPGVVSVTEIYNYYKQNGYNTVVMGASFRNIGEIIELAGCDRLTIGPALLEELANTDVEIIQKLVATPATQSAPAALTEEQFRWVFNEDPMAVDKLAEGIRNFAIDQGKLEVMLKTKLS</sequence>
<gene>
    <name evidence="2" type="primary">tal</name>
    <name type="ordered locus">Sfri_2900</name>
</gene>
<protein>
    <recommendedName>
        <fullName evidence="2">Transaldolase</fullName>
        <ecNumber evidence="2">2.2.1.2</ecNumber>
    </recommendedName>
</protein>
<proteinExistence type="inferred from homology"/>
<accession>Q07Z25</accession>
<organism>
    <name type="scientific">Shewanella frigidimarina (strain NCIMB 400)</name>
    <dbReference type="NCBI Taxonomy" id="318167"/>
    <lineage>
        <taxon>Bacteria</taxon>
        <taxon>Pseudomonadati</taxon>
        <taxon>Pseudomonadota</taxon>
        <taxon>Gammaproteobacteria</taxon>
        <taxon>Alteromonadales</taxon>
        <taxon>Shewanellaceae</taxon>
        <taxon>Shewanella</taxon>
    </lineage>
</organism>
<reference key="1">
    <citation type="submission" date="2006-08" db="EMBL/GenBank/DDBJ databases">
        <title>Complete sequence of Shewanella frigidimarina NCIMB 400.</title>
        <authorList>
            <consortium name="US DOE Joint Genome Institute"/>
            <person name="Copeland A."/>
            <person name="Lucas S."/>
            <person name="Lapidus A."/>
            <person name="Barry K."/>
            <person name="Detter J.C."/>
            <person name="Glavina del Rio T."/>
            <person name="Hammon N."/>
            <person name="Israni S."/>
            <person name="Dalin E."/>
            <person name="Tice H."/>
            <person name="Pitluck S."/>
            <person name="Fredrickson J.K."/>
            <person name="Kolker E."/>
            <person name="McCuel L.A."/>
            <person name="DiChristina T."/>
            <person name="Nealson K.H."/>
            <person name="Newman D."/>
            <person name="Tiedje J.M."/>
            <person name="Zhou J."/>
            <person name="Romine M.F."/>
            <person name="Culley D.E."/>
            <person name="Serres M."/>
            <person name="Chertkov O."/>
            <person name="Brettin T."/>
            <person name="Bruce D."/>
            <person name="Han C."/>
            <person name="Tapia R."/>
            <person name="Gilna P."/>
            <person name="Schmutz J."/>
            <person name="Larimer F."/>
            <person name="Land M."/>
            <person name="Hauser L."/>
            <person name="Kyrpides N."/>
            <person name="Mikhailova N."/>
            <person name="Richardson P."/>
        </authorList>
    </citation>
    <scope>NUCLEOTIDE SEQUENCE [LARGE SCALE GENOMIC DNA]</scope>
    <source>
        <strain>NCIMB 400</strain>
    </source>
</reference>